<accession>P51332</accession>
<name>CLPC_PORPU</name>
<proteinExistence type="inferred from homology"/>
<comment type="function">
    <text>May interact with a ClpP-like protease involved in degradation of denatured proteins in the chloroplast.</text>
</comment>
<comment type="subcellular location">
    <subcellularLocation>
        <location>Plastid</location>
        <location>Chloroplast</location>
    </subcellularLocation>
</comment>
<comment type="similarity">
    <text evidence="3">Belongs to the ClpA/ClpB family.</text>
</comment>
<gene>
    <name type="primary">clpC</name>
</gene>
<reference key="1">
    <citation type="journal article" date="1995" name="Plant Mol. Biol. Rep.">
        <title>Complete nucleotide sequence of the Porphyra purpurea chloroplast genome.</title>
        <authorList>
            <person name="Reith M.E."/>
            <person name="Munholland J."/>
        </authorList>
    </citation>
    <scope>NUCLEOTIDE SEQUENCE [LARGE SCALE GENOMIC DNA]</scope>
    <source>
        <strain>Avonport</strain>
    </source>
</reference>
<feature type="chain" id="PRO_0000191219" description="ATP-dependent Clp protease ATP-binding subunit ClpA homolog">
    <location>
        <begin position="1"/>
        <end position="821"/>
    </location>
</feature>
<feature type="domain" description="Clp R" evidence="2">
    <location>
        <begin position="2"/>
        <end position="144"/>
    </location>
</feature>
<feature type="region of interest" description="Repeat 1" evidence="2">
    <location>
        <begin position="5"/>
        <end position="70"/>
    </location>
</feature>
<feature type="region of interest" description="Repeat 2" evidence="2">
    <location>
        <begin position="80"/>
        <end position="144"/>
    </location>
</feature>
<feature type="binding site" evidence="1">
    <location>
        <begin position="210"/>
        <end position="217"/>
    </location>
    <ligand>
        <name>ATP</name>
        <dbReference type="ChEBI" id="CHEBI:30616"/>
    </ligand>
</feature>
<feature type="binding site" evidence="1">
    <location>
        <begin position="549"/>
        <end position="556"/>
    </location>
    <ligand>
        <name>ATP</name>
        <dbReference type="ChEBI" id="CHEBI:30616"/>
    </ligand>
</feature>
<protein>
    <recommendedName>
        <fullName>ATP-dependent Clp protease ATP-binding subunit ClpA homolog</fullName>
    </recommendedName>
</protein>
<evidence type="ECO:0000255" key="1"/>
<evidence type="ECO:0000255" key="2">
    <source>
        <dbReference type="PROSITE-ProRule" id="PRU01251"/>
    </source>
</evidence>
<evidence type="ECO:0000305" key="3"/>
<dbReference type="EMBL" id="U38804">
    <property type="protein sequence ID" value="AAC08218.1"/>
    <property type="molecule type" value="Genomic_DNA"/>
</dbReference>
<dbReference type="PIR" id="S73253">
    <property type="entry name" value="S73253"/>
</dbReference>
<dbReference type="RefSeq" id="NP_053942.1">
    <property type="nucleotide sequence ID" value="NC_000925.1"/>
</dbReference>
<dbReference type="SMR" id="P51332"/>
<dbReference type="GeneID" id="809966"/>
<dbReference type="GO" id="GO:0009507">
    <property type="term" value="C:chloroplast"/>
    <property type="evidence" value="ECO:0007669"/>
    <property type="project" value="UniProtKB-SubCell"/>
</dbReference>
<dbReference type="GO" id="GO:0005524">
    <property type="term" value="F:ATP binding"/>
    <property type="evidence" value="ECO:0007669"/>
    <property type="project" value="UniProtKB-KW"/>
</dbReference>
<dbReference type="GO" id="GO:0016887">
    <property type="term" value="F:ATP hydrolysis activity"/>
    <property type="evidence" value="ECO:0007669"/>
    <property type="project" value="InterPro"/>
</dbReference>
<dbReference type="GO" id="GO:0034605">
    <property type="term" value="P:cellular response to heat"/>
    <property type="evidence" value="ECO:0007669"/>
    <property type="project" value="TreeGrafter"/>
</dbReference>
<dbReference type="CDD" id="cd00009">
    <property type="entry name" value="AAA"/>
    <property type="match status" value="1"/>
</dbReference>
<dbReference type="CDD" id="cd19499">
    <property type="entry name" value="RecA-like_ClpB_Hsp104-like"/>
    <property type="match status" value="1"/>
</dbReference>
<dbReference type="FunFam" id="1.10.1780.10:FF:000004">
    <property type="entry name" value="ATP-dependent Clp protease ATP-binding subunit ClpC"/>
    <property type="match status" value="1"/>
</dbReference>
<dbReference type="FunFam" id="3.40.50.300:FF:000025">
    <property type="entry name" value="ATP-dependent Clp protease subunit"/>
    <property type="match status" value="1"/>
</dbReference>
<dbReference type="FunFam" id="3.40.50.300:FF:000010">
    <property type="entry name" value="Chaperone clpB 1, putative"/>
    <property type="match status" value="1"/>
</dbReference>
<dbReference type="Gene3D" id="1.10.8.60">
    <property type="match status" value="2"/>
</dbReference>
<dbReference type="Gene3D" id="1.10.1780.10">
    <property type="entry name" value="Clp, N-terminal domain"/>
    <property type="match status" value="1"/>
</dbReference>
<dbReference type="Gene3D" id="3.40.50.300">
    <property type="entry name" value="P-loop containing nucleotide triphosphate hydrolases"/>
    <property type="match status" value="2"/>
</dbReference>
<dbReference type="Gene3D" id="4.10.860.10">
    <property type="entry name" value="UVR domain"/>
    <property type="match status" value="1"/>
</dbReference>
<dbReference type="InterPro" id="IPR003593">
    <property type="entry name" value="AAA+_ATPase"/>
</dbReference>
<dbReference type="InterPro" id="IPR003959">
    <property type="entry name" value="ATPase_AAA_core"/>
</dbReference>
<dbReference type="InterPro" id="IPR019489">
    <property type="entry name" value="Clp_ATPase_C"/>
</dbReference>
<dbReference type="InterPro" id="IPR036628">
    <property type="entry name" value="Clp_N_dom_sf"/>
</dbReference>
<dbReference type="InterPro" id="IPR004176">
    <property type="entry name" value="Clp_R_dom"/>
</dbReference>
<dbReference type="InterPro" id="IPR001270">
    <property type="entry name" value="ClpA/B"/>
</dbReference>
<dbReference type="InterPro" id="IPR018368">
    <property type="entry name" value="ClpA/B_CS1"/>
</dbReference>
<dbReference type="InterPro" id="IPR028299">
    <property type="entry name" value="ClpA/B_CS2"/>
</dbReference>
<dbReference type="InterPro" id="IPR041546">
    <property type="entry name" value="ClpA/ClpB_AAA_lid"/>
</dbReference>
<dbReference type="InterPro" id="IPR050130">
    <property type="entry name" value="ClpA_ClpB"/>
</dbReference>
<dbReference type="InterPro" id="IPR027417">
    <property type="entry name" value="P-loop_NTPase"/>
</dbReference>
<dbReference type="InterPro" id="IPR001943">
    <property type="entry name" value="UVR_dom"/>
</dbReference>
<dbReference type="PANTHER" id="PTHR11638">
    <property type="entry name" value="ATP-DEPENDENT CLP PROTEASE"/>
    <property type="match status" value="1"/>
</dbReference>
<dbReference type="PANTHER" id="PTHR11638:SF155">
    <property type="entry name" value="CHAPERONE PROTEIN CLPC1, CHLOROPLASTIC-LIKE"/>
    <property type="match status" value="1"/>
</dbReference>
<dbReference type="Pfam" id="PF00004">
    <property type="entry name" value="AAA"/>
    <property type="match status" value="1"/>
</dbReference>
<dbReference type="Pfam" id="PF07724">
    <property type="entry name" value="AAA_2"/>
    <property type="match status" value="1"/>
</dbReference>
<dbReference type="Pfam" id="PF17871">
    <property type="entry name" value="AAA_lid_9"/>
    <property type="match status" value="1"/>
</dbReference>
<dbReference type="Pfam" id="PF02861">
    <property type="entry name" value="Clp_N"/>
    <property type="match status" value="2"/>
</dbReference>
<dbReference type="Pfam" id="PF10431">
    <property type="entry name" value="ClpB_D2-small"/>
    <property type="match status" value="1"/>
</dbReference>
<dbReference type="PRINTS" id="PR00300">
    <property type="entry name" value="CLPPROTEASEA"/>
</dbReference>
<dbReference type="SMART" id="SM00382">
    <property type="entry name" value="AAA"/>
    <property type="match status" value="2"/>
</dbReference>
<dbReference type="SMART" id="SM01086">
    <property type="entry name" value="ClpB_D2-small"/>
    <property type="match status" value="1"/>
</dbReference>
<dbReference type="SUPFAM" id="SSF81923">
    <property type="entry name" value="Double Clp-N motif"/>
    <property type="match status" value="1"/>
</dbReference>
<dbReference type="SUPFAM" id="SSF52540">
    <property type="entry name" value="P-loop containing nucleoside triphosphate hydrolases"/>
    <property type="match status" value="2"/>
</dbReference>
<dbReference type="PROSITE" id="PS51903">
    <property type="entry name" value="CLP_R"/>
    <property type="match status" value="1"/>
</dbReference>
<dbReference type="PROSITE" id="PS00870">
    <property type="entry name" value="CLPAB_1"/>
    <property type="match status" value="1"/>
</dbReference>
<dbReference type="PROSITE" id="PS00871">
    <property type="entry name" value="CLPAB_2"/>
    <property type="match status" value="1"/>
</dbReference>
<dbReference type="PROSITE" id="PS50151">
    <property type="entry name" value="UVR"/>
    <property type="match status" value="1"/>
</dbReference>
<sequence>MFERFTEKAIKVIMLAQEEARRLGHNFVGTEQILLGLVGEGTGIAAQVLKSMNVNLKDARVEVEKIIGRGSGFVAVEIPFTPRAKRVLELSLEEARQLGHNYIGTEHLLMGLVREGEGVAARVLENLAVDVSSIRAEVIQMLGENAEANVSGSNATQARSKTPTLEEFGSNLTQMAIEGGLDPVVGRQKEIERVIQILGRRTKNNPVLIGEPGVGKTAIAEGLAQRIANRDVPSILEDKLVITLDVGLLVAGTKYRGEFEERLKRIMDEIKSADNVILVIDEVHTLIGAGAAEGAIDAANLLKPALARGELQCIGATTLEEYRKHIEKDPALERRFHPVVVGEPSVEETIEILFGLRDRYEKHHQLTMSDGALAAAAKYANQYISDRFLPDKAIDLIDEAGSRVRLLNSQLPPAARELDKELRAVLKTKDEAIRAQKYETAEQYRAREMEIKAQIAAIAQSKKNEPDLNLEDPVVTEDDIAEIVAAWTGIPVTKLTKSESEKLMQMEETLHGRIIGQDEAVIAVSRAIRRARVGLKNPNRPIASFIFSGPTGVGKTELTKALASYFFGSEASMIRLDMSEYMERHTVSKLIGSPPGYVGYSEGGYLTEAVRKKPYTVILFDEIEKAHPDIFNLLLQILEDGRLTDAKGRTIDFKNTLLIMTSNIGSKVIEKGGGSLGFELSEDQTESQYTRVRSLVNEELKQYFRPEFLNRLDEIIVFRQLTKDEVREIAELMLNEVFARIKQQDIQLNVTERFKERLVEEGYNPSYGARPLRRAVMRLLEDSLAEEVLSGKIKAGDSPVVDVTNEGEVKVLLGEKLELLT</sequence>
<geneLocation type="chloroplast"/>
<keyword id="KW-0067">ATP-binding</keyword>
<keyword id="KW-0143">Chaperone</keyword>
<keyword id="KW-0150">Chloroplast</keyword>
<keyword id="KW-0547">Nucleotide-binding</keyword>
<keyword id="KW-0934">Plastid</keyword>
<keyword id="KW-0677">Repeat</keyword>
<organism>
    <name type="scientific">Porphyra purpurea</name>
    <name type="common">Red seaweed</name>
    <name type="synonym">Ulva purpurea</name>
    <dbReference type="NCBI Taxonomy" id="2787"/>
    <lineage>
        <taxon>Eukaryota</taxon>
        <taxon>Rhodophyta</taxon>
        <taxon>Bangiophyceae</taxon>
        <taxon>Bangiales</taxon>
        <taxon>Bangiaceae</taxon>
        <taxon>Porphyra</taxon>
    </lineage>
</organism>